<sequence>ALWKTMLKKLGTVALHAGKAALGAAADTISQGA</sequence>
<proteinExistence type="evidence at protein level"/>
<keyword id="KW-0027">Amidation</keyword>
<keyword id="KW-0878">Amphibian defense peptide</keyword>
<keyword id="KW-0044">Antibiotic</keyword>
<keyword id="KW-0929">Antimicrobial</keyword>
<keyword id="KW-0903">Direct protein sequencing</keyword>
<keyword id="KW-0964">Secreted</keyword>
<protein>
    <recommendedName>
        <fullName evidence="4">Dermaseptin DS VIII-like peptide</fullName>
    </recommendedName>
</protein>
<feature type="peptide" id="PRO_0000378911" description="Dermaseptin DS VIII-like peptide" evidence="3">
    <location>
        <begin position="1"/>
        <end position="33"/>
    </location>
</feature>
<feature type="modified residue" description="Alanine amide" evidence="3">
    <location>
        <position position="33"/>
    </location>
</feature>
<evidence type="ECO:0000250" key="1">
    <source>
        <dbReference type="UniProtKB" id="P24302"/>
    </source>
</evidence>
<evidence type="ECO:0000255" key="2"/>
<evidence type="ECO:0000269" key="3">
    <source ref="1"/>
</evidence>
<evidence type="ECO:0000303" key="4">
    <source ref="1"/>
</evidence>
<evidence type="ECO:0000305" key="5"/>
<comment type="function">
    <text evidence="1">Possesses a potent antimicrobial activity against bacteria, fungi and protozoa. Probably acts by disturbing membrane functions with its amphipathic structure (By similarity).</text>
</comment>
<comment type="subcellular location">
    <subcellularLocation>
        <location evidence="3">Secreted</location>
    </subcellularLocation>
</comment>
<comment type="tissue specificity">
    <text evidence="3">Expressed by the parotoid glands.</text>
</comment>
<comment type="mass spectrometry"/>
<comment type="similarity">
    <text evidence="2">Belongs to the frog skin active peptide (FSAP) family. Dermaseptin subfamily.</text>
</comment>
<name>DMS8_PHYBU</name>
<dbReference type="GO" id="GO:0005576">
    <property type="term" value="C:extracellular region"/>
    <property type="evidence" value="ECO:0007669"/>
    <property type="project" value="UniProtKB-SubCell"/>
</dbReference>
<dbReference type="GO" id="GO:0042742">
    <property type="term" value="P:defense response to bacterium"/>
    <property type="evidence" value="ECO:0007669"/>
    <property type="project" value="UniProtKB-KW"/>
</dbReference>
<dbReference type="InterPro" id="IPR022731">
    <property type="entry name" value="Dermaseptin_dom"/>
</dbReference>
<dbReference type="Pfam" id="PF12121">
    <property type="entry name" value="DD_K"/>
    <property type="match status" value="1"/>
</dbReference>
<reference evidence="5" key="1">
    <citation type="submission" date="2009-04" db="UniProtKB">
        <title>Identification of peptides from Phyllomedusa burmesteri skin secretomics by nano LC MS/MS.</title>
        <authorList>
            <person name="Conceicao K."/>
            <person name="Klitzke C.F."/>
            <person name="Brito R.C."/>
            <person name="Andrade D.F."/>
            <person name="Junca F.A."/>
            <person name="Biondi I."/>
            <person name="Lopes-Ferreira M."/>
        </authorList>
    </citation>
    <scope>PROTEIN SEQUENCE</scope>
    <scope>SUBCELLULAR LOCATION</scope>
    <scope>TISSUE SPECIFICITY</scope>
    <scope>MASS SPECTROMETRY</scope>
    <scope>AMIDATION AT ALA-33</scope>
    <source>
        <tissue evidence="3">Parotoid gland secretion</tissue>
    </source>
</reference>
<accession>P86280</accession>
<organism>
    <name type="scientific">Phyllomedusa burmeisteri</name>
    <name type="common">Brazilian common walking leaf frog</name>
    <dbReference type="NCBI Taxonomy" id="39413"/>
    <lineage>
        <taxon>Eukaryota</taxon>
        <taxon>Metazoa</taxon>
        <taxon>Chordata</taxon>
        <taxon>Craniata</taxon>
        <taxon>Vertebrata</taxon>
        <taxon>Euteleostomi</taxon>
        <taxon>Amphibia</taxon>
        <taxon>Batrachia</taxon>
        <taxon>Anura</taxon>
        <taxon>Neobatrachia</taxon>
        <taxon>Hyloidea</taxon>
        <taxon>Hylidae</taxon>
        <taxon>Phyllomedusinae</taxon>
        <taxon>Phyllomedusa</taxon>
    </lineage>
</organism>